<dbReference type="EMBL" id="M99443">
    <property type="protein sequence ID" value="AAA23318.1"/>
    <property type="molecule type" value="Genomic_DNA"/>
</dbReference>
<dbReference type="PIR" id="A47073">
    <property type="entry name" value="A47073"/>
</dbReference>
<dbReference type="SMR" id="P31295"/>
<dbReference type="GO" id="GO:0005737">
    <property type="term" value="C:cytoplasm"/>
    <property type="evidence" value="ECO:0007669"/>
    <property type="project" value="UniProtKB-SubCell"/>
</dbReference>
<dbReference type="GO" id="GO:0005524">
    <property type="term" value="F:ATP binding"/>
    <property type="evidence" value="ECO:0007669"/>
    <property type="project" value="InterPro"/>
</dbReference>
<dbReference type="GO" id="GO:0046872">
    <property type="term" value="F:metal ion binding"/>
    <property type="evidence" value="ECO:0007669"/>
    <property type="project" value="TreeGrafter"/>
</dbReference>
<dbReference type="GO" id="GO:0044183">
    <property type="term" value="F:protein folding chaperone"/>
    <property type="evidence" value="ECO:0007669"/>
    <property type="project" value="InterPro"/>
</dbReference>
<dbReference type="GO" id="GO:0051087">
    <property type="term" value="F:protein-folding chaperone binding"/>
    <property type="evidence" value="ECO:0007669"/>
    <property type="project" value="TreeGrafter"/>
</dbReference>
<dbReference type="GO" id="GO:0051082">
    <property type="term" value="F:unfolded protein binding"/>
    <property type="evidence" value="ECO:0007669"/>
    <property type="project" value="TreeGrafter"/>
</dbReference>
<dbReference type="GO" id="GO:0051085">
    <property type="term" value="P:chaperone cofactor-dependent protein refolding"/>
    <property type="evidence" value="ECO:0007669"/>
    <property type="project" value="TreeGrafter"/>
</dbReference>
<dbReference type="CDD" id="cd00320">
    <property type="entry name" value="cpn10"/>
    <property type="match status" value="1"/>
</dbReference>
<dbReference type="FunFam" id="2.30.33.40:FF:000001">
    <property type="entry name" value="10 kDa chaperonin"/>
    <property type="match status" value="1"/>
</dbReference>
<dbReference type="Gene3D" id="2.30.33.40">
    <property type="entry name" value="GroES chaperonin"/>
    <property type="match status" value="1"/>
</dbReference>
<dbReference type="HAMAP" id="MF_00580">
    <property type="entry name" value="CH10"/>
    <property type="match status" value="1"/>
</dbReference>
<dbReference type="InterPro" id="IPR020818">
    <property type="entry name" value="Chaperonin_GroES"/>
</dbReference>
<dbReference type="InterPro" id="IPR037124">
    <property type="entry name" value="Chaperonin_GroES_sf"/>
</dbReference>
<dbReference type="InterPro" id="IPR018369">
    <property type="entry name" value="Chaprnonin_Cpn10_CS"/>
</dbReference>
<dbReference type="InterPro" id="IPR011032">
    <property type="entry name" value="GroES-like_sf"/>
</dbReference>
<dbReference type="NCBIfam" id="NF001527">
    <property type="entry name" value="PRK00364.1-2"/>
    <property type="match status" value="1"/>
</dbReference>
<dbReference type="NCBIfam" id="NF001529">
    <property type="entry name" value="PRK00364.1-5"/>
    <property type="match status" value="1"/>
</dbReference>
<dbReference type="NCBIfam" id="NF001531">
    <property type="entry name" value="PRK00364.2-2"/>
    <property type="match status" value="1"/>
</dbReference>
<dbReference type="NCBIfam" id="NF001533">
    <property type="entry name" value="PRK00364.2-4"/>
    <property type="match status" value="1"/>
</dbReference>
<dbReference type="NCBIfam" id="NF001534">
    <property type="entry name" value="PRK00364.2-5"/>
    <property type="match status" value="1"/>
</dbReference>
<dbReference type="PANTHER" id="PTHR10772">
    <property type="entry name" value="10 KDA HEAT SHOCK PROTEIN"/>
    <property type="match status" value="1"/>
</dbReference>
<dbReference type="PANTHER" id="PTHR10772:SF58">
    <property type="entry name" value="CO-CHAPERONIN GROES"/>
    <property type="match status" value="1"/>
</dbReference>
<dbReference type="Pfam" id="PF00166">
    <property type="entry name" value="Cpn10"/>
    <property type="match status" value="1"/>
</dbReference>
<dbReference type="PRINTS" id="PR00297">
    <property type="entry name" value="CHAPERONIN10"/>
</dbReference>
<dbReference type="SMART" id="SM00883">
    <property type="entry name" value="Cpn10"/>
    <property type="match status" value="1"/>
</dbReference>
<dbReference type="SUPFAM" id="SSF50129">
    <property type="entry name" value="GroES-like"/>
    <property type="match status" value="1"/>
</dbReference>
<dbReference type="PROSITE" id="PS00681">
    <property type="entry name" value="CHAPERONINS_CPN10"/>
    <property type="match status" value="1"/>
</dbReference>
<reference key="1">
    <citation type="journal article" date="1993" name="J. Bacteriol.">
        <title>Cloning, characterization, and functional expression in Escherichia coli of chaperonin (groESL) genes from the phototrophic sulfur bacterium Chromatium vinosum.</title>
        <authorList>
            <person name="Ferreyra R."/>
            <person name="Soncini F."/>
            <person name="Viale A.M."/>
        </authorList>
    </citation>
    <scope>NUCLEOTIDE SEQUENCE [GENOMIC DNA]</scope>
</reference>
<reference key="2">
    <citation type="journal article" date="1992" name="Arch. Biochem. Biophys.">
        <title>Purification and characterization of chaperonin 10 from Chromatium vinosum.</title>
        <authorList>
            <person name="Torres-Ruiz J.A."/>
            <person name="McFadden B.A."/>
        </authorList>
    </citation>
    <scope>PROTEIN SEQUENCE OF 1-20</scope>
    <scope>CHARACTERIZATION</scope>
</reference>
<reference key="3">
    <citation type="journal article" date="1998" name="Protein Expr. Purif.">
        <title>Purification and characterization of Chromatium vinosum GroEL and GroES proteins overexpressed in Escherichia coli cells lacking the endogenous groESL operon.</title>
        <authorList>
            <person name="Dionisi H.M."/>
            <person name="Viale A.M."/>
        </authorList>
    </citation>
    <scope>CHARACTERIZATION</scope>
</reference>
<comment type="function">
    <text evidence="1">Together with the chaperonin GroEL, plays an essential role in assisting protein folding. The GroEL-GroES system forms a nano-cage that allows encapsulation of the non-native substrate proteins and provides a physical environment optimized to promote and accelerate protein folding. GroES binds to the apical surface of the GroEL ring, thereby capping the opening of the GroEL channel.</text>
</comment>
<comment type="subunit">
    <text evidence="1">Heptamer of 7 subunits arranged in a ring. Interacts with the chaperonin GroEL.</text>
</comment>
<comment type="subcellular location">
    <subcellularLocation>
        <location evidence="1">Cytoplasm</location>
    </subcellularLocation>
</comment>
<comment type="similarity">
    <text evidence="1 2">Belongs to the GroES chaperonin family.</text>
</comment>
<feature type="chain" id="PRO_0000174733" description="Co-chaperonin GroES">
    <location>
        <begin position="1"/>
        <end position="96"/>
    </location>
</feature>
<gene>
    <name evidence="1" type="primary">groES</name>
    <name evidence="1" type="synonym">groS</name>
</gene>
<evidence type="ECO:0000255" key="1">
    <source>
        <dbReference type="HAMAP-Rule" id="MF_00580"/>
    </source>
</evidence>
<evidence type="ECO:0000305" key="2"/>
<accession>P31295</accession>
<keyword id="KW-0143">Chaperone</keyword>
<keyword id="KW-0963">Cytoplasm</keyword>
<keyword id="KW-0903">Direct protein sequencing</keyword>
<proteinExistence type="evidence at protein level"/>
<organism>
    <name type="scientific">Allochromatium vinosum</name>
    <name type="common">Chromatium vinosum</name>
    <dbReference type="NCBI Taxonomy" id="1049"/>
    <lineage>
        <taxon>Bacteria</taxon>
        <taxon>Pseudomonadati</taxon>
        <taxon>Pseudomonadota</taxon>
        <taxon>Gammaproteobacteria</taxon>
        <taxon>Chromatiales</taxon>
        <taxon>Chromatiaceae</taxon>
        <taxon>Allochromatium</taxon>
    </lineage>
</organism>
<protein>
    <recommendedName>
        <fullName evidence="1">Co-chaperonin GroES</fullName>
    </recommendedName>
    <alternativeName>
        <fullName evidence="1">10 kDa chaperonin</fullName>
    </alternativeName>
    <alternativeName>
        <fullName evidence="1">Chaperonin-10</fullName>
        <shortName evidence="1">Cpn10</shortName>
    </alternativeName>
</protein>
<name>CH10_ALLVI</name>
<sequence>MNIRPLHDRVVVRRMEEERLSAGGIVIPDSATEKPIQGEIIAVGHGKILDNGSVRALDVKVGDSVLFGKYSGTEVKLDGKEFLVMREEDIMAVVEG</sequence>